<evidence type="ECO:0000255" key="1">
    <source>
        <dbReference type="HAMAP-Rule" id="MF_01398"/>
    </source>
</evidence>
<accession>A8ZU97</accession>
<dbReference type="EMBL" id="CP000859">
    <property type="protein sequence ID" value="ABW66409.1"/>
    <property type="molecule type" value="Genomic_DNA"/>
</dbReference>
<dbReference type="RefSeq" id="WP_012174028.1">
    <property type="nucleotide sequence ID" value="NC_009943.1"/>
</dbReference>
<dbReference type="SMR" id="A8ZU97"/>
<dbReference type="STRING" id="96561.Dole_0599"/>
<dbReference type="KEGG" id="dol:Dole_0599"/>
<dbReference type="eggNOG" id="COG0711">
    <property type="taxonomic scope" value="Bacteria"/>
</dbReference>
<dbReference type="HOGENOM" id="CLU_079215_3_0_7"/>
<dbReference type="OrthoDB" id="5471016at2"/>
<dbReference type="Proteomes" id="UP000008561">
    <property type="component" value="Chromosome"/>
</dbReference>
<dbReference type="GO" id="GO:0005886">
    <property type="term" value="C:plasma membrane"/>
    <property type="evidence" value="ECO:0007669"/>
    <property type="project" value="UniProtKB-SubCell"/>
</dbReference>
<dbReference type="GO" id="GO:0045259">
    <property type="term" value="C:proton-transporting ATP synthase complex"/>
    <property type="evidence" value="ECO:0007669"/>
    <property type="project" value="UniProtKB-KW"/>
</dbReference>
<dbReference type="GO" id="GO:0046933">
    <property type="term" value="F:proton-transporting ATP synthase activity, rotational mechanism"/>
    <property type="evidence" value="ECO:0007669"/>
    <property type="project" value="UniProtKB-UniRule"/>
</dbReference>
<dbReference type="GO" id="GO:0046961">
    <property type="term" value="F:proton-transporting ATPase activity, rotational mechanism"/>
    <property type="evidence" value="ECO:0007669"/>
    <property type="project" value="TreeGrafter"/>
</dbReference>
<dbReference type="CDD" id="cd06503">
    <property type="entry name" value="ATP-synt_Fo_b"/>
    <property type="match status" value="1"/>
</dbReference>
<dbReference type="HAMAP" id="MF_01398">
    <property type="entry name" value="ATP_synth_b_bprime"/>
    <property type="match status" value="1"/>
</dbReference>
<dbReference type="InterPro" id="IPR002146">
    <property type="entry name" value="ATP_synth_b/b'su_bac/chlpt"/>
</dbReference>
<dbReference type="InterPro" id="IPR050059">
    <property type="entry name" value="ATP_synthase_B_chain"/>
</dbReference>
<dbReference type="PANTHER" id="PTHR33445:SF1">
    <property type="entry name" value="ATP SYNTHASE SUBUNIT B"/>
    <property type="match status" value="1"/>
</dbReference>
<dbReference type="PANTHER" id="PTHR33445">
    <property type="entry name" value="ATP SYNTHASE SUBUNIT B', CHLOROPLASTIC"/>
    <property type="match status" value="1"/>
</dbReference>
<dbReference type="Pfam" id="PF00430">
    <property type="entry name" value="ATP-synt_B"/>
    <property type="match status" value="1"/>
</dbReference>
<proteinExistence type="inferred from homology"/>
<keyword id="KW-0066">ATP synthesis</keyword>
<keyword id="KW-0997">Cell inner membrane</keyword>
<keyword id="KW-1003">Cell membrane</keyword>
<keyword id="KW-0138">CF(0)</keyword>
<keyword id="KW-0375">Hydrogen ion transport</keyword>
<keyword id="KW-0406">Ion transport</keyword>
<keyword id="KW-0472">Membrane</keyword>
<keyword id="KW-1185">Reference proteome</keyword>
<keyword id="KW-0812">Transmembrane</keyword>
<keyword id="KW-1133">Transmembrane helix</keyword>
<keyword id="KW-0813">Transport</keyword>
<protein>
    <recommendedName>
        <fullName evidence="1">ATP synthase subunit b 1</fullName>
    </recommendedName>
    <alternativeName>
        <fullName evidence="1">ATP synthase F(0) sector subunit b 1</fullName>
    </alternativeName>
    <alternativeName>
        <fullName evidence="1">ATPase subunit I 1</fullName>
    </alternativeName>
    <alternativeName>
        <fullName evidence="1">F-type ATPase subunit b 1</fullName>
        <shortName evidence="1">F-ATPase subunit b 1</shortName>
    </alternativeName>
</protein>
<sequence>MRLFGMCESVKKKAAVIVVVSLMAFCCAGFAVAAEHGAEAAPKGWVATDTFRVMNFAVLAIALFLLLRKPVAGALNNRIAGIREELARLEAQKEEARKALEAYNERLKMLDKEAEKIIEDYKKQGEAAKARIMESAQASAAKLEEQARRNIDNEFESARQKLRLDIFEQAVARAEALVTEKITPDDQHRLVEEYLDKAVL</sequence>
<name>ATPF1_DESOH</name>
<feature type="chain" id="PRO_0000368457" description="ATP synthase subunit b 1">
    <location>
        <begin position="1"/>
        <end position="200"/>
    </location>
</feature>
<feature type="transmembrane region" description="Helical" evidence="1">
    <location>
        <begin position="14"/>
        <end position="34"/>
    </location>
</feature>
<gene>
    <name evidence="1" type="primary">atpF1</name>
    <name type="ordered locus">Dole_0599</name>
</gene>
<comment type="function">
    <text evidence="1">F(1)F(0) ATP synthase produces ATP from ADP in the presence of a proton or sodium gradient. F-type ATPases consist of two structural domains, F(1) containing the extramembraneous catalytic core and F(0) containing the membrane proton channel, linked together by a central stalk and a peripheral stalk. During catalysis, ATP synthesis in the catalytic domain of F(1) is coupled via a rotary mechanism of the central stalk subunits to proton translocation.</text>
</comment>
<comment type="function">
    <text evidence="1">Component of the F(0) channel, it forms part of the peripheral stalk, linking F(1) to F(0).</text>
</comment>
<comment type="subunit">
    <text evidence="1">F-type ATPases have 2 components, F(1) - the catalytic core - and F(0) - the membrane proton channel. F(1) has five subunits: alpha(3), beta(3), gamma(1), delta(1), epsilon(1). F(0) has three main subunits: a(1), b(2) and c(10-14). The alpha and beta chains form an alternating ring which encloses part of the gamma chain. F(1) is attached to F(0) by a central stalk formed by the gamma and epsilon chains, while a peripheral stalk is formed by the delta and b chains.</text>
</comment>
<comment type="subcellular location">
    <subcellularLocation>
        <location evidence="1">Cell inner membrane</location>
        <topology evidence="1">Single-pass membrane protein</topology>
    </subcellularLocation>
</comment>
<comment type="similarity">
    <text evidence="1">Belongs to the ATPase B chain family.</text>
</comment>
<reference key="1">
    <citation type="submission" date="2007-10" db="EMBL/GenBank/DDBJ databases">
        <title>Complete sequence of Desulfococcus oleovorans Hxd3.</title>
        <authorList>
            <consortium name="US DOE Joint Genome Institute"/>
            <person name="Copeland A."/>
            <person name="Lucas S."/>
            <person name="Lapidus A."/>
            <person name="Barry K."/>
            <person name="Glavina del Rio T."/>
            <person name="Dalin E."/>
            <person name="Tice H."/>
            <person name="Pitluck S."/>
            <person name="Kiss H."/>
            <person name="Brettin T."/>
            <person name="Bruce D."/>
            <person name="Detter J.C."/>
            <person name="Han C."/>
            <person name="Schmutz J."/>
            <person name="Larimer F."/>
            <person name="Land M."/>
            <person name="Hauser L."/>
            <person name="Kyrpides N."/>
            <person name="Kim E."/>
            <person name="Wawrik B."/>
            <person name="Richardson P."/>
        </authorList>
    </citation>
    <scope>NUCLEOTIDE SEQUENCE [LARGE SCALE GENOMIC DNA]</scope>
    <source>
        <strain>DSM 6200 / JCM 39069 / Hxd3</strain>
    </source>
</reference>
<organism>
    <name type="scientific">Desulfosudis oleivorans (strain DSM 6200 / JCM 39069 / Hxd3)</name>
    <name type="common">Desulfococcus oleovorans</name>
    <dbReference type="NCBI Taxonomy" id="96561"/>
    <lineage>
        <taxon>Bacteria</taxon>
        <taxon>Pseudomonadati</taxon>
        <taxon>Thermodesulfobacteriota</taxon>
        <taxon>Desulfobacteria</taxon>
        <taxon>Desulfobacterales</taxon>
        <taxon>Desulfosudaceae</taxon>
        <taxon>Desulfosudis</taxon>
    </lineage>
</organism>